<keyword id="KW-0648">Protein biosynthesis</keyword>
<keyword id="KW-0808">Transferase</keyword>
<organism>
    <name type="scientific">Lacticaseibacillus casei (strain BL23)</name>
    <name type="common">Lactobacillus casei</name>
    <dbReference type="NCBI Taxonomy" id="543734"/>
    <lineage>
        <taxon>Bacteria</taxon>
        <taxon>Bacillati</taxon>
        <taxon>Bacillota</taxon>
        <taxon>Bacilli</taxon>
        <taxon>Lactobacillales</taxon>
        <taxon>Lactobacillaceae</taxon>
        <taxon>Lacticaseibacillus</taxon>
    </lineage>
</organism>
<dbReference type="EC" id="2.1.2.9" evidence="1"/>
<dbReference type="EMBL" id="FM177140">
    <property type="protein sequence ID" value="CAQ66920.1"/>
    <property type="molecule type" value="Genomic_DNA"/>
</dbReference>
<dbReference type="SMR" id="B3WEW9"/>
<dbReference type="KEGG" id="lcb:LCABL_18400"/>
<dbReference type="HOGENOM" id="CLU_033347_1_1_9"/>
<dbReference type="GO" id="GO:0005829">
    <property type="term" value="C:cytosol"/>
    <property type="evidence" value="ECO:0007669"/>
    <property type="project" value="TreeGrafter"/>
</dbReference>
<dbReference type="GO" id="GO:0004479">
    <property type="term" value="F:methionyl-tRNA formyltransferase activity"/>
    <property type="evidence" value="ECO:0007669"/>
    <property type="project" value="UniProtKB-UniRule"/>
</dbReference>
<dbReference type="CDD" id="cd08646">
    <property type="entry name" value="FMT_core_Met-tRNA-FMT_N"/>
    <property type="match status" value="1"/>
</dbReference>
<dbReference type="CDD" id="cd08704">
    <property type="entry name" value="Met_tRNA_FMT_C"/>
    <property type="match status" value="1"/>
</dbReference>
<dbReference type="Gene3D" id="3.40.50.12230">
    <property type="match status" value="1"/>
</dbReference>
<dbReference type="HAMAP" id="MF_00182">
    <property type="entry name" value="Formyl_trans"/>
    <property type="match status" value="1"/>
</dbReference>
<dbReference type="InterPro" id="IPR005794">
    <property type="entry name" value="Fmt"/>
</dbReference>
<dbReference type="InterPro" id="IPR005793">
    <property type="entry name" value="Formyl_trans_C"/>
</dbReference>
<dbReference type="InterPro" id="IPR002376">
    <property type="entry name" value="Formyl_transf_N"/>
</dbReference>
<dbReference type="InterPro" id="IPR036477">
    <property type="entry name" value="Formyl_transf_N_sf"/>
</dbReference>
<dbReference type="InterPro" id="IPR011034">
    <property type="entry name" value="Formyl_transferase-like_C_sf"/>
</dbReference>
<dbReference type="InterPro" id="IPR044135">
    <property type="entry name" value="Met-tRNA-FMT_C"/>
</dbReference>
<dbReference type="InterPro" id="IPR041711">
    <property type="entry name" value="Met-tRNA-FMT_N"/>
</dbReference>
<dbReference type="NCBIfam" id="TIGR00460">
    <property type="entry name" value="fmt"/>
    <property type="match status" value="1"/>
</dbReference>
<dbReference type="PANTHER" id="PTHR11138">
    <property type="entry name" value="METHIONYL-TRNA FORMYLTRANSFERASE"/>
    <property type="match status" value="1"/>
</dbReference>
<dbReference type="PANTHER" id="PTHR11138:SF5">
    <property type="entry name" value="METHIONYL-TRNA FORMYLTRANSFERASE, MITOCHONDRIAL"/>
    <property type="match status" value="1"/>
</dbReference>
<dbReference type="Pfam" id="PF02911">
    <property type="entry name" value="Formyl_trans_C"/>
    <property type="match status" value="1"/>
</dbReference>
<dbReference type="Pfam" id="PF00551">
    <property type="entry name" value="Formyl_trans_N"/>
    <property type="match status" value="1"/>
</dbReference>
<dbReference type="SUPFAM" id="SSF50486">
    <property type="entry name" value="FMT C-terminal domain-like"/>
    <property type="match status" value="1"/>
</dbReference>
<dbReference type="SUPFAM" id="SSF53328">
    <property type="entry name" value="Formyltransferase"/>
    <property type="match status" value="1"/>
</dbReference>
<proteinExistence type="inferred from homology"/>
<name>FMT_LACCB</name>
<protein>
    <recommendedName>
        <fullName evidence="1">Methionyl-tRNA formyltransferase</fullName>
        <ecNumber evidence="1">2.1.2.9</ecNumber>
    </recommendedName>
</protein>
<comment type="function">
    <text evidence="1">Attaches a formyl group to the free amino group of methionyl-tRNA(fMet). The formyl group appears to play a dual role in the initiator identity of N-formylmethionyl-tRNA by promoting its recognition by IF2 and preventing the misappropriation of this tRNA by the elongation apparatus.</text>
</comment>
<comment type="catalytic activity">
    <reaction evidence="1">
        <text>L-methionyl-tRNA(fMet) + (6R)-10-formyltetrahydrofolate = N-formyl-L-methionyl-tRNA(fMet) + (6S)-5,6,7,8-tetrahydrofolate + H(+)</text>
        <dbReference type="Rhea" id="RHEA:24380"/>
        <dbReference type="Rhea" id="RHEA-COMP:9952"/>
        <dbReference type="Rhea" id="RHEA-COMP:9953"/>
        <dbReference type="ChEBI" id="CHEBI:15378"/>
        <dbReference type="ChEBI" id="CHEBI:57453"/>
        <dbReference type="ChEBI" id="CHEBI:78530"/>
        <dbReference type="ChEBI" id="CHEBI:78844"/>
        <dbReference type="ChEBI" id="CHEBI:195366"/>
        <dbReference type="EC" id="2.1.2.9"/>
    </reaction>
</comment>
<comment type="similarity">
    <text evidence="1">Belongs to the Fmt family.</text>
</comment>
<gene>
    <name evidence="1" type="primary">fmt</name>
    <name type="ordered locus">LCABL_18400</name>
</gene>
<feature type="chain" id="PRO_1000098413" description="Methionyl-tRNA formyltransferase">
    <location>
        <begin position="1"/>
        <end position="318"/>
    </location>
</feature>
<feature type="binding site" evidence="1">
    <location>
        <begin position="110"/>
        <end position="113"/>
    </location>
    <ligand>
        <name>(6S)-5,6,7,8-tetrahydrofolate</name>
        <dbReference type="ChEBI" id="CHEBI:57453"/>
    </ligand>
</feature>
<reference key="1">
    <citation type="submission" date="2008-06" db="EMBL/GenBank/DDBJ databases">
        <title>Lactobacillus casei BL23 complete genome sequence.</title>
        <authorList>
            <person name="Maze A."/>
            <person name="Boel G."/>
            <person name="Bourand A."/>
            <person name="Loux V."/>
            <person name="Gibrat J.F."/>
            <person name="Zuniga M."/>
            <person name="Hartke A."/>
            <person name="Deutscher J."/>
        </authorList>
    </citation>
    <scope>NUCLEOTIDE SEQUENCE [LARGE SCALE GENOMIC DNA]</scope>
    <source>
        <strain>BL23</strain>
    </source>
</reference>
<evidence type="ECO:0000255" key="1">
    <source>
        <dbReference type="HAMAP-Rule" id="MF_00182"/>
    </source>
</evidence>
<accession>B3WEW9</accession>
<sequence>MTSVIFLGTPEFAVPILEGLIAQHYDILAVMTQPDRKVGRKQRLAASPVKQAAQKHDIPVLQPEKLSGSPELAQAIAMAPDLIVTAAYGQFLPTKFLEAAKIIAVNVHGSLLPKYRGGAPIQYSIMNGDSETGVTIIEMVKKMDAGDMFAQAKLPLTRADDTGTVFAKLSLLGRDLLLETLPKIIAGTATRTPQDPDKVTFSPTITKEQEHLNIHLPAKALDQWIRALRPDVGGYVYLNGQRTKLWAITPLSAGSTLPAGSIVERDKHRLVMVAGQQTTFQVDELQPAGKAKQSIADFLNGPGQQLVSGQQVITDDPE</sequence>